<reference key="1">
    <citation type="submission" date="2009-01" db="EMBL/GenBank/DDBJ databases">
        <title>Complete sequence of Anaeromyxobacter dehalogenans 2CP-1.</title>
        <authorList>
            <person name="Lucas S."/>
            <person name="Copeland A."/>
            <person name="Lapidus A."/>
            <person name="Glavina del Rio T."/>
            <person name="Dalin E."/>
            <person name="Tice H."/>
            <person name="Bruce D."/>
            <person name="Goodwin L."/>
            <person name="Pitluck S."/>
            <person name="Saunders E."/>
            <person name="Brettin T."/>
            <person name="Detter J.C."/>
            <person name="Han C."/>
            <person name="Larimer F."/>
            <person name="Land M."/>
            <person name="Hauser L."/>
            <person name="Kyrpides N."/>
            <person name="Ovchinnikova G."/>
            <person name="Beliaev A.S."/>
            <person name="Richardson P."/>
        </authorList>
    </citation>
    <scope>NUCLEOTIDE SEQUENCE [LARGE SCALE GENOMIC DNA]</scope>
    <source>
        <strain>2CP-1 / ATCC BAA-258</strain>
    </source>
</reference>
<gene>
    <name evidence="1" type="primary">rpoA</name>
    <name type="ordered locus">A2cp1_2045</name>
</gene>
<protein>
    <recommendedName>
        <fullName evidence="1">DNA-directed RNA polymerase subunit alpha</fullName>
        <shortName evidence="1">RNAP subunit alpha</shortName>
        <ecNumber evidence="1">2.7.7.6</ecNumber>
    </recommendedName>
    <alternativeName>
        <fullName evidence="1">RNA polymerase subunit alpha</fullName>
    </alternativeName>
    <alternativeName>
        <fullName evidence="1">Transcriptase subunit alpha</fullName>
    </alternativeName>
</protein>
<sequence>MVDPIVTKNWRDLIKPRGLVVDQDSLSNTYGKFVAEPLERGFGITLGNSLRRVLLSSLQGAAITSVKVEGVEHEFMTIPEVAEDVTDIILNLKEVLLQIHTNDVKTIRIEADGPKEIKAGDLITDAQVEVLNPGHHILTISEGGRVRAEMTARRGRGYVPAERNKIPGSPIGTIPIDALFSPIRKVNYQVTNARVGQQTDYDKLTLEVWTDGSVAPADAVAFAAKIVKEQLSIFINFDEAEEPAEEIKPVEEQKLNENLFRSVDELELSVRSANCLQNANIKTIGDLVQKTEAEMLKTKNFGRKSLKEIKEILAEMGLSLGMKLENWPPKAAPQGGAPKV</sequence>
<proteinExistence type="inferred from homology"/>
<evidence type="ECO:0000255" key="1">
    <source>
        <dbReference type="HAMAP-Rule" id="MF_00059"/>
    </source>
</evidence>
<name>RPOA_ANAD2</name>
<organism>
    <name type="scientific">Anaeromyxobacter dehalogenans (strain 2CP-1 / ATCC BAA-258)</name>
    <dbReference type="NCBI Taxonomy" id="455488"/>
    <lineage>
        <taxon>Bacteria</taxon>
        <taxon>Pseudomonadati</taxon>
        <taxon>Myxococcota</taxon>
        <taxon>Myxococcia</taxon>
        <taxon>Myxococcales</taxon>
        <taxon>Cystobacterineae</taxon>
        <taxon>Anaeromyxobacteraceae</taxon>
        <taxon>Anaeromyxobacter</taxon>
    </lineage>
</organism>
<keyword id="KW-0240">DNA-directed RNA polymerase</keyword>
<keyword id="KW-0548">Nucleotidyltransferase</keyword>
<keyword id="KW-0804">Transcription</keyword>
<keyword id="KW-0808">Transferase</keyword>
<comment type="function">
    <text evidence="1">DNA-dependent RNA polymerase catalyzes the transcription of DNA into RNA using the four ribonucleoside triphosphates as substrates.</text>
</comment>
<comment type="catalytic activity">
    <reaction evidence="1">
        <text>RNA(n) + a ribonucleoside 5'-triphosphate = RNA(n+1) + diphosphate</text>
        <dbReference type="Rhea" id="RHEA:21248"/>
        <dbReference type="Rhea" id="RHEA-COMP:14527"/>
        <dbReference type="Rhea" id="RHEA-COMP:17342"/>
        <dbReference type="ChEBI" id="CHEBI:33019"/>
        <dbReference type="ChEBI" id="CHEBI:61557"/>
        <dbReference type="ChEBI" id="CHEBI:140395"/>
        <dbReference type="EC" id="2.7.7.6"/>
    </reaction>
</comment>
<comment type="subunit">
    <text evidence="1">Homodimer. The RNAP catalytic core consists of 2 alpha, 1 beta, 1 beta' and 1 omega subunit. When a sigma factor is associated with the core the holoenzyme is formed, which can initiate transcription.</text>
</comment>
<comment type="domain">
    <text evidence="1">The N-terminal domain is essential for RNAP assembly and basal transcription, whereas the C-terminal domain is involved in interaction with transcriptional regulators and with upstream promoter elements.</text>
</comment>
<comment type="similarity">
    <text evidence="1">Belongs to the RNA polymerase alpha chain family.</text>
</comment>
<dbReference type="EC" id="2.7.7.6" evidence="1"/>
<dbReference type="EMBL" id="CP001359">
    <property type="protein sequence ID" value="ACL65386.1"/>
    <property type="molecule type" value="Genomic_DNA"/>
</dbReference>
<dbReference type="RefSeq" id="WP_012525990.1">
    <property type="nucleotide sequence ID" value="NC_011891.1"/>
</dbReference>
<dbReference type="SMR" id="B8J887"/>
<dbReference type="KEGG" id="acp:A2cp1_2045"/>
<dbReference type="HOGENOM" id="CLU_053084_0_1_7"/>
<dbReference type="Proteomes" id="UP000007089">
    <property type="component" value="Chromosome"/>
</dbReference>
<dbReference type="GO" id="GO:0005737">
    <property type="term" value="C:cytoplasm"/>
    <property type="evidence" value="ECO:0007669"/>
    <property type="project" value="UniProtKB-ARBA"/>
</dbReference>
<dbReference type="GO" id="GO:0000428">
    <property type="term" value="C:DNA-directed RNA polymerase complex"/>
    <property type="evidence" value="ECO:0007669"/>
    <property type="project" value="UniProtKB-KW"/>
</dbReference>
<dbReference type="GO" id="GO:0003677">
    <property type="term" value="F:DNA binding"/>
    <property type="evidence" value="ECO:0007669"/>
    <property type="project" value="UniProtKB-UniRule"/>
</dbReference>
<dbReference type="GO" id="GO:0003899">
    <property type="term" value="F:DNA-directed RNA polymerase activity"/>
    <property type="evidence" value="ECO:0007669"/>
    <property type="project" value="UniProtKB-UniRule"/>
</dbReference>
<dbReference type="GO" id="GO:0046983">
    <property type="term" value="F:protein dimerization activity"/>
    <property type="evidence" value="ECO:0007669"/>
    <property type="project" value="InterPro"/>
</dbReference>
<dbReference type="GO" id="GO:0006351">
    <property type="term" value="P:DNA-templated transcription"/>
    <property type="evidence" value="ECO:0007669"/>
    <property type="project" value="UniProtKB-UniRule"/>
</dbReference>
<dbReference type="CDD" id="cd06928">
    <property type="entry name" value="RNAP_alpha_NTD"/>
    <property type="match status" value="1"/>
</dbReference>
<dbReference type="FunFam" id="1.10.150.20:FF:000001">
    <property type="entry name" value="DNA-directed RNA polymerase subunit alpha"/>
    <property type="match status" value="1"/>
</dbReference>
<dbReference type="FunFam" id="2.170.120.12:FF:000001">
    <property type="entry name" value="DNA-directed RNA polymerase subunit alpha"/>
    <property type="match status" value="1"/>
</dbReference>
<dbReference type="Gene3D" id="1.10.150.20">
    <property type="entry name" value="5' to 3' exonuclease, C-terminal subdomain"/>
    <property type="match status" value="1"/>
</dbReference>
<dbReference type="Gene3D" id="2.170.120.12">
    <property type="entry name" value="DNA-directed RNA polymerase, insert domain"/>
    <property type="match status" value="1"/>
</dbReference>
<dbReference type="Gene3D" id="3.30.1360.10">
    <property type="entry name" value="RNA polymerase, RBP11-like subunit"/>
    <property type="match status" value="1"/>
</dbReference>
<dbReference type="HAMAP" id="MF_00059">
    <property type="entry name" value="RNApol_bact_RpoA"/>
    <property type="match status" value="1"/>
</dbReference>
<dbReference type="InterPro" id="IPR011262">
    <property type="entry name" value="DNA-dir_RNA_pol_insert"/>
</dbReference>
<dbReference type="InterPro" id="IPR011263">
    <property type="entry name" value="DNA-dir_RNA_pol_RpoA/D/Rpb3"/>
</dbReference>
<dbReference type="InterPro" id="IPR011773">
    <property type="entry name" value="DNA-dir_RpoA"/>
</dbReference>
<dbReference type="InterPro" id="IPR036603">
    <property type="entry name" value="RBP11-like"/>
</dbReference>
<dbReference type="InterPro" id="IPR011260">
    <property type="entry name" value="RNAP_asu_C"/>
</dbReference>
<dbReference type="InterPro" id="IPR036643">
    <property type="entry name" value="RNApol_insert_sf"/>
</dbReference>
<dbReference type="NCBIfam" id="NF003513">
    <property type="entry name" value="PRK05182.1-2"/>
    <property type="match status" value="1"/>
</dbReference>
<dbReference type="NCBIfam" id="NF003515">
    <property type="entry name" value="PRK05182.2-1"/>
    <property type="match status" value="1"/>
</dbReference>
<dbReference type="NCBIfam" id="NF003519">
    <property type="entry name" value="PRK05182.2-5"/>
    <property type="match status" value="1"/>
</dbReference>
<dbReference type="NCBIfam" id="TIGR02027">
    <property type="entry name" value="rpoA"/>
    <property type="match status" value="1"/>
</dbReference>
<dbReference type="Pfam" id="PF01000">
    <property type="entry name" value="RNA_pol_A_bac"/>
    <property type="match status" value="1"/>
</dbReference>
<dbReference type="Pfam" id="PF03118">
    <property type="entry name" value="RNA_pol_A_CTD"/>
    <property type="match status" value="1"/>
</dbReference>
<dbReference type="Pfam" id="PF01193">
    <property type="entry name" value="RNA_pol_L"/>
    <property type="match status" value="1"/>
</dbReference>
<dbReference type="SMART" id="SM00662">
    <property type="entry name" value="RPOLD"/>
    <property type="match status" value="1"/>
</dbReference>
<dbReference type="SUPFAM" id="SSF47789">
    <property type="entry name" value="C-terminal domain of RNA polymerase alpha subunit"/>
    <property type="match status" value="1"/>
</dbReference>
<dbReference type="SUPFAM" id="SSF56553">
    <property type="entry name" value="Insert subdomain of RNA polymerase alpha subunit"/>
    <property type="match status" value="1"/>
</dbReference>
<dbReference type="SUPFAM" id="SSF55257">
    <property type="entry name" value="RBP11-like subunits of RNA polymerase"/>
    <property type="match status" value="1"/>
</dbReference>
<accession>B8J887</accession>
<feature type="chain" id="PRO_1000196624" description="DNA-directed RNA polymerase subunit alpha">
    <location>
        <begin position="1"/>
        <end position="340"/>
    </location>
</feature>
<feature type="region of interest" description="Alpha N-terminal domain (alpha-NTD)" evidence="1">
    <location>
        <begin position="1"/>
        <end position="238"/>
    </location>
</feature>
<feature type="region of interest" description="Alpha C-terminal domain (alpha-CTD)" evidence="1">
    <location>
        <begin position="255"/>
        <end position="340"/>
    </location>
</feature>